<protein>
    <recommendedName>
        <fullName>Cell division ATP-binding protein FtsE</fullName>
    </recommendedName>
</protein>
<sequence length="218" mass="24349">MIKFSNVSKAYHGATQPALQGLNFHLPVGSMTYLVGHSGAGKSTLLKLIMGMEKANAGQIWFNGHDITRLSKYEIPFLRRQIGMVHQDYRLLTDRTVVENVALPLIIAGMHPKDANTRAMASLDRVGLRNKAHYLPPQISGGEQQRVDIARAIVHKPQLLLADEPTGNLDDELSLGIFNLFEEFNRLGMTVLIATHDINLIQQKPKPCLVLEQGYLRY</sequence>
<comment type="function">
    <text evidence="1">Part of the ABC transporter FtsEX involved in cellular division. Important for assembly or stability of the septal ring.</text>
</comment>
<comment type="subunit">
    <text evidence="1">Homodimer. Forms a membrane-associated complex with FtsX.</text>
</comment>
<comment type="subcellular location">
    <subcellularLocation>
        <location evidence="1">Cell inner membrane</location>
        <topology evidence="1">Peripheral membrane protein</topology>
        <orientation evidence="1">Cytoplasmic side</orientation>
    </subcellularLocation>
    <text evidence="1">Associated with the membrane through an interaction with FtsX.</text>
</comment>
<comment type="similarity">
    <text evidence="3">Belongs to the ABC transporter superfamily.</text>
</comment>
<organism>
    <name type="scientific">Haemophilus influenzae (strain ATCC 51907 / DSM 11121 / KW20 / Rd)</name>
    <dbReference type="NCBI Taxonomy" id="71421"/>
    <lineage>
        <taxon>Bacteria</taxon>
        <taxon>Pseudomonadati</taxon>
        <taxon>Pseudomonadota</taxon>
        <taxon>Gammaproteobacteria</taxon>
        <taxon>Pasteurellales</taxon>
        <taxon>Pasteurellaceae</taxon>
        <taxon>Haemophilus</taxon>
    </lineage>
</organism>
<name>FTSE_HAEIN</name>
<feature type="chain" id="PRO_0000092331" description="Cell division ATP-binding protein FtsE">
    <location>
        <begin position="1"/>
        <end position="218"/>
    </location>
</feature>
<feature type="domain" description="ABC transporter" evidence="2">
    <location>
        <begin position="2"/>
        <end position="218"/>
    </location>
</feature>
<feature type="binding site" evidence="2">
    <location>
        <begin position="36"/>
        <end position="43"/>
    </location>
    <ligand>
        <name>ATP</name>
        <dbReference type="ChEBI" id="CHEBI:30616"/>
    </ligand>
</feature>
<dbReference type="EMBL" id="L42023">
    <property type="protein sequence ID" value="AAC22427.1"/>
    <property type="molecule type" value="Genomic_DNA"/>
</dbReference>
<dbReference type="PIR" id="H64091">
    <property type="entry name" value="H64091"/>
</dbReference>
<dbReference type="RefSeq" id="NP_438928.1">
    <property type="nucleotide sequence ID" value="NC_000907.1"/>
</dbReference>
<dbReference type="SMR" id="P44871"/>
<dbReference type="STRING" id="71421.HI_0769"/>
<dbReference type="EnsemblBacteria" id="AAC22427">
    <property type="protein sequence ID" value="AAC22427"/>
    <property type="gene ID" value="HI_0769"/>
</dbReference>
<dbReference type="KEGG" id="hin:HI_0769"/>
<dbReference type="PATRIC" id="fig|71421.8.peg.808"/>
<dbReference type="eggNOG" id="COG2884">
    <property type="taxonomic scope" value="Bacteria"/>
</dbReference>
<dbReference type="HOGENOM" id="CLU_000604_1_22_6"/>
<dbReference type="OrthoDB" id="9802264at2"/>
<dbReference type="PhylomeDB" id="P44871"/>
<dbReference type="BioCyc" id="HINF71421:G1GJ1-809-MONOMER"/>
<dbReference type="Proteomes" id="UP000000579">
    <property type="component" value="Chromosome"/>
</dbReference>
<dbReference type="GO" id="GO:0005886">
    <property type="term" value="C:plasma membrane"/>
    <property type="evidence" value="ECO:0000318"/>
    <property type="project" value="GO_Central"/>
</dbReference>
<dbReference type="GO" id="GO:0005524">
    <property type="term" value="F:ATP binding"/>
    <property type="evidence" value="ECO:0007669"/>
    <property type="project" value="UniProtKB-KW"/>
</dbReference>
<dbReference type="GO" id="GO:0016887">
    <property type="term" value="F:ATP hydrolysis activity"/>
    <property type="evidence" value="ECO:0007669"/>
    <property type="project" value="InterPro"/>
</dbReference>
<dbReference type="GO" id="GO:0022857">
    <property type="term" value="F:transmembrane transporter activity"/>
    <property type="evidence" value="ECO:0000318"/>
    <property type="project" value="GO_Central"/>
</dbReference>
<dbReference type="GO" id="GO:0051301">
    <property type="term" value="P:cell division"/>
    <property type="evidence" value="ECO:0007669"/>
    <property type="project" value="UniProtKB-KW"/>
</dbReference>
<dbReference type="GO" id="GO:0055085">
    <property type="term" value="P:transmembrane transport"/>
    <property type="evidence" value="ECO:0000318"/>
    <property type="project" value="GO_Central"/>
</dbReference>
<dbReference type="FunFam" id="3.40.50.300:FF:000056">
    <property type="entry name" value="Cell division ATP-binding protein FtsE"/>
    <property type="match status" value="1"/>
</dbReference>
<dbReference type="Gene3D" id="3.40.50.300">
    <property type="entry name" value="P-loop containing nucleotide triphosphate hydrolases"/>
    <property type="match status" value="1"/>
</dbReference>
<dbReference type="InterPro" id="IPR003593">
    <property type="entry name" value="AAA+_ATPase"/>
</dbReference>
<dbReference type="InterPro" id="IPR003439">
    <property type="entry name" value="ABC_transporter-like_ATP-bd"/>
</dbReference>
<dbReference type="InterPro" id="IPR017871">
    <property type="entry name" value="ABC_transporter-like_CS"/>
</dbReference>
<dbReference type="InterPro" id="IPR015854">
    <property type="entry name" value="ABC_transpr_LolD-like"/>
</dbReference>
<dbReference type="InterPro" id="IPR005286">
    <property type="entry name" value="Cell_div_FtsE"/>
</dbReference>
<dbReference type="InterPro" id="IPR027417">
    <property type="entry name" value="P-loop_NTPase"/>
</dbReference>
<dbReference type="NCBIfam" id="TIGR02673">
    <property type="entry name" value="FtsE"/>
    <property type="match status" value="1"/>
</dbReference>
<dbReference type="PANTHER" id="PTHR24220:SF470">
    <property type="entry name" value="CELL DIVISION ATP-BINDING PROTEIN FTSE"/>
    <property type="match status" value="1"/>
</dbReference>
<dbReference type="PANTHER" id="PTHR24220">
    <property type="entry name" value="IMPORT ATP-BINDING PROTEIN"/>
    <property type="match status" value="1"/>
</dbReference>
<dbReference type="Pfam" id="PF00005">
    <property type="entry name" value="ABC_tran"/>
    <property type="match status" value="1"/>
</dbReference>
<dbReference type="SMART" id="SM00382">
    <property type="entry name" value="AAA"/>
    <property type="match status" value="1"/>
</dbReference>
<dbReference type="SUPFAM" id="SSF52540">
    <property type="entry name" value="P-loop containing nucleoside triphosphate hydrolases"/>
    <property type="match status" value="1"/>
</dbReference>
<dbReference type="PROSITE" id="PS00211">
    <property type="entry name" value="ABC_TRANSPORTER_1"/>
    <property type="match status" value="1"/>
</dbReference>
<dbReference type="PROSITE" id="PS50893">
    <property type="entry name" value="ABC_TRANSPORTER_2"/>
    <property type="match status" value="1"/>
</dbReference>
<evidence type="ECO:0000250" key="1">
    <source>
        <dbReference type="UniProtKB" id="P0A9R7"/>
    </source>
</evidence>
<evidence type="ECO:0000255" key="2">
    <source>
        <dbReference type="PROSITE-ProRule" id="PRU00434"/>
    </source>
</evidence>
<evidence type="ECO:0000305" key="3"/>
<accession>P44871</accession>
<proteinExistence type="inferred from homology"/>
<gene>
    <name type="primary">ftsE</name>
    <name type="ordered locus">HI_0769</name>
</gene>
<keyword id="KW-0067">ATP-binding</keyword>
<keyword id="KW-0131">Cell cycle</keyword>
<keyword id="KW-0132">Cell division</keyword>
<keyword id="KW-0997">Cell inner membrane</keyword>
<keyword id="KW-1003">Cell membrane</keyword>
<keyword id="KW-0472">Membrane</keyword>
<keyword id="KW-0547">Nucleotide-binding</keyword>
<keyword id="KW-1185">Reference proteome</keyword>
<reference key="1">
    <citation type="journal article" date="1995" name="Science">
        <title>Whole-genome random sequencing and assembly of Haemophilus influenzae Rd.</title>
        <authorList>
            <person name="Fleischmann R.D."/>
            <person name="Adams M.D."/>
            <person name="White O."/>
            <person name="Clayton R.A."/>
            <person name="Kirkness E.F."/>
            <person name="Kerlavage A.R."/>
            <person name="Bult C.J."/>
            <person name="Tomb J.-F."/>
            <person name="Dougherty B.A."/>
            <person name="Merrick J.M."/>
            <person name="McKenney K."/>
            <person name="Sutton G.G."/>
            <person name="FitzHugh W."/>
            <person name="Fields C.A."/>
            <person name="Gocayne J.D."/>
            <person name="Scott J.D."/>
            <person name="Shirley R."/>
            <person name="Liu L.-I."/>
            <person name="Glodek A."/>
            <person name="Kelley J.M."/>
            <person name="Weidman J.F."/>
            <person name="Phillips C.A."/>
            <person name="Spriggs T."/>
            <person name="Hedblom E."/>
            <person name="Cotton M.D."/>
            <person name="Utterback T.R."/>
            <person name="Hanna M.C."/>
            <person name="Nguyen D.T."/>
            <person name="Saudek D.M."/>
            <person name="Brandon R.C."/>
            <person name="Fine L.D."/>
            <person name="Fritchman J.L."/>
            <person name="Fuhrmann J.L."/>
            <person name="Geoghagen N.S.M."/>
            <person name="Gnehm C.L."/>
            <person name="McDonald L.A."/>
            <person name="Small K.V."/>
            <person name="Fraser C.M."/>
            <person name="Smith H.O."/>
            <person name="Venter J.C."/>
        </authorList>
    </citation>
    <scope>NUCLEOTIDE SEQUENCE [LARGE SCALE GENOMIC DNA]</scope>
    <source>
        <strain>ATCC 51907 / DSM 11121 / KW20 / Rd</strain>
    </source>
</reference>